<name>POPD1_HUMAN</name>
<protein>
    <recommendedName>
        <fullName>Popeye domain-containing protein 1</fullName>
        <shortName>Popeye protein 1</shortName>
    </recommendedName>
</protein>
<proteinExistence type="evidence at protein level"/>
<keyword id="KW-0114">cAMP</keyword>
<keyword id="KW-0116">cAMP-binding</keyword>
<keyword id="KW-0130">Cell adhesion</keyword>
<keyword id="KW-0965">Cell junction</keyword>
<keyword id="KW-1003">Cell membrane</keyword>
<keyword id="KW-0217">Developmental protein</keyword>
<keyword id="KW-0325">Glycoprotein</keyword>
<keyword id="KW-0947">Limb-girdle muscular dystrophy</keyword>
<keyword id="KW-0472">Membrane</keyword>
<keyword id="KW-0547">Nucleotide-binding</keyword>
<keyword id="KW-0597">Phosphoprotein</keyword>
<keyword id="KW-1267">Proteomics identification</keyword>
<keyword id="KW-1185">Reference proteome</keyword>
<keyword id="KW-0796">Tight junction</keyword>
<keyword id="KW-0812">Transmembrane</keyword>
<keyword id="KW-1133">Transmembrane helix</keyword>
<organism>
    <name type="scientific">Homo sapiens</name>
    <name type="common">Human</name>
    <dbReference type="NCBI Taxonomy" id="9606"/>
    <lineage>
        <taxon>Eukaryota</taxon>
        <taxon>Metazoa</taxon>
        <taxon>Chordata</taxon>
        <taxon>Craniata</taxon>
        <taxon>Vertebrata</taxon>
        <taxon>Euteleostomi</taxon>
        <taxon>Mammalia</taxon>
        <taxon>Eutheria</taxon>
        <taxon>Euarchontoglires</taxon>
        <taxon>Primates</taxon>
        <taxon>Haplorrhini</taxon>
        <taxon>Catarrhini</taxon>
        <taxon>Hominidae</taxon>
        <taxon>Homo</taxon>
    </lineage>
</organism>
<accession>Q8NE79</accession>
<accession>A8K1R4</accession>
<accession>E1P5D8</accession>
<accession>Q5T550</accession>
<accession>Q5T551</accession>
<accession>Q8IWC6</accession>
<accession>Q9HBV0</accession>
<accession>Q9UNG6</accession>
<sequence>MNYTESSPLRESTAIGFTPELESIIPVPSNKTTCENWREIHHLVFHVANICFAVGLVIPTTLHLHMIFLRGMLTLGCTLYIVWATLYRCALDIMIWNSVFLGVNILHLSYLLYKKRPVKIEKELSGMYRRLFEPLRVPPDLFRRLTGQFCMIQTLKKGQTYAAEDKTSVDDRLSILLKGKMKVSYRGHFLHNIYPCAFIDSPEFRSTQMHKGEKFQVTIIADDNCRFLCWSRERLTYFLESEPFLYEIFRYLIGKDITNKLYSLNDPTLNDKKAKKLEHQLSLCTQISMLEMRNSIASSSDSDDGLHQFLRGTSSMSSLHVSSPHQRASAKMKPIEEGAEDDDDVFEPASPNTLKVHQLP</sequence>
<gene>
    <name evidence="12" type="primary">POPDC1</name>
    <name evidence="12" type="synonym">BVES</name>
    <name evidence="12" type="synonym">POP1</name>
</gene>
<comment type="function">
    <text evidence="2 4 9 10">Cell adhesion molecule involved in the establishment and/or maintenance of cell integrity. Involved in the formation and regulation of the tight junction (TJ) paracellular permeability barrier in epithelial cells (PubMed:16188940). Plays a role in VAMP3-mediated vesicular transport and recycling of different receptor molecules through its interaction with VAMP3. Plays a role in the regulation of cell shape and movement by modulating the Rho-family GTPase activity through its interaction with ARHGEF25/GEFT. Induces primordial adhesive contact and aggregation of epithelial cells in a Ca(2+)-independent manner. Also involved in striated muscle regeneration and repair and in the regulation of cell spreading (By similarity). Important for the maintenance of cardiac function. Plays a regulatory function in heart rate dynamics mediated, at least in part, through cAMP-binding and, probably, by increasing cell surface expression of the potassium channel KCNK2 and enhancing current density (PubMed:26642364). Is also a caveolae-associated protein important for the preservation of caveolae structural and functional integrity as well as for heart protection against ischemia injury.</text>
</comment>
<comment type="subunit">
    <text evidence="3 4 10">Homodimer. Homodimerization requires the C-terminus cytoplasmic region. Interacts (via the C-terminus cytoplasmic tail) with TJP1. Interacts (via the C-terminus cytoplasmic tail) with ARHGEF25/GEFT (via the DH domain). Interacts (via the C-terminus cytoplasmic tail) with VAMP3 (By similarity). Interacts with KCNK2; the interaction enhances KCNK2 surface expression and is inhibited by cAMP (By similarity) (PubMed:26642364). Interacts with CAV3 (By similarity).</text>
</comment>
<comment type="subcellular location">
    <subcellularLocation>
        <location evidence="9">Lateral cell membrane</location>
    </subcellularLocation>
    <subcellularLocation>
        <location evidence="9">Cell junction</location>
        <location evidence="9">Tight junction</location>
    </subcellularLocation>
    <subcellularLocation>
        <location evidence="10">Membrane</location>
        <topology evidence="11">Multi-pass membrane protein</topology>
    </subcellularLocation>
    <subcellularLocation>
        <location evidence="10">Cell membrane</location>
        <location evidence="10">Sarcolemma</location>
    </subcellularLocation>
    <subcellularLocation>
        <location evidence="4">Membrane</location>
        <location evidence="4">Caveola</location>
    </subcellularLocation>
    <text evidence="4">Colocalizes with VAMP3 at the cell-cell contact in cardiac and skeletal muscle (By similarity). Its movement from the cytoplasm to membrane is an early event occurring concurrently with cell-cell contact. Colocalizes in epithelial cells with OCLN and TJP1 in an apical-lateral position within the z axis. Detected at cell-cell contact but never observed at the free surface of epithelial cells.</text>
</comment>
<comment type="tissue specificity">
    <text evidence="7 8 9 10">Expressed in epithelial cells (at protein level). Expressed in fetal and adult heart and skeletal muscle.</text>
</comment>
<comment type="disease" evidence="10">
    <disease id="DI-04650">
        <name>Muscular dystrophy, limb-girdle, autosomal recessive 25</name>
        <acronym>LGMDR25</acronym>
        <description>An autosomal recessive muscular disorder characterized by slowly progressive onset of proximal lower limb weakness in adulthood, syncopal episodes, and markedly increased serum creatine kinase, which can increase further after strenuous exercise.</description>
        <dbReference type="MIM" id="616812"/>
    </disease>
    <text>The disease is caused by variants affecting the gene represented in this entry.</text>
</comment>
<comment type="similarity">
    <text evidence="11">Belongs to the popeye family.</text>
</comment>
<feature type="chain" id="PRO_0000046791" description="Popeye domain-containing protein 1">
    <location>
        <begin position="1"/>
        <end position="360"/>
    </location>
</feature>
<feature type="topological domain" description="Extracellular" evidence="5">
    <location>
        <begin position="1"/>
        <end position="48"/>
    </location>
</feature>
<feature type="transmembrane region" description="Helical" evidence="5">
    <location>
        <begin position="49"/>
        <end position="69"/>
    </location>
</feature>
<feature type="topological domain" description="Cytoplasmic" evidence="5">
    <location>
        <position position="70"/>
    </location>
</feature>
<feature type="transmembrane region" description="Helical" evidence="5">
    <location>
        <begin position="71"/>
        <end position="91"/>
    </location>
</feature>
<feature type="topological domain" description="Extracellular" evidence="5">
    <location>
        <position position="92"/>
    </location>
</feature>
<feature type="transmembrane region" description="Helical" evidence="5">
    <location>
        <begin position="93"/>
        <end position="113"/>
    </location>
</feature>
<feature type="topological domain" description="Cytoplasmic" evidence="5">
    <location>
        <begin position="114"/>
        <end position="360"/>
    </location>
</feature>
<feature type="region of interest" description="Required for interaction with CAV3" evidence="4">
    <location>
        <begin position="93"/>
        <end position="115"/>
    </location>
</feature>
<feature type="region of interest" description="Required for interaction with KCNK2" evidence="10">
    <location>
        <begin position="136"/>
        <end position="186"/>
    </location>
</feature>
<feature type="region of interest" description="Disordered" evidence="6">
    <location>
        <begin position="317"/>
        <end position="360"/>
    </location>
</feature>
<feature type="compositionally biased region" description="Acidic residues" evidence="6">
    <location>
        <begin position="337"/>
        <end position="346"/>
    </location>
</feature>
<feature type="compositionally biased region" description="Polar residues" evidence="6">
    <location>
        <begin position="350"/>
        <end position="360"/>
    </location>
</feature>
<feature type="modified residue" description="Phosphoserine" evidence="4">
    <location>
        <position position="295"/>
    </location>
</feature>
<feature type="modified residue" description="Phosphoserine" evidence="1">
    <location>
        <position position="318"/>
    </location>
</feature>
<feature type="glycosylation site" description="N-linked (GlcNAc...) asparagine" evidence="5">
    <location>
        <position position="2"/>
    </location>
</feature>
<feature type="glycosylation site" description="N-linked (GlcNAc...) asparagine" evidence="5">
    <location>
        <position position="30"/>
    </location>
</feature>
<feature type="sequence variant" id="VAR_053600" description="In dbSNP:rs9486039.">
    <original>M</original>
    <variation>I</variation>
    <location>
        <position position="127"/>
    </location>
</feature>
<feature type="sequence variant" id="VAR_017155" description="In dbSNP:rs2275289.">
    <original>R</original>
    <variation>W</variation>
    <location>
        <position position="129"/>
    </location>
</feature>
<feature type="sequence variant" id="VAR_075625" description="In LGMDR25; reduces membrane localization of POPDC1 and POPDC2; decreases by 50% affinity for cAMP; disrupts enhancement of KCKN2 surface expression; increases KCKN2 outward currents; no effect on total protein levels; dbSNP:rs869025337." evidence="10">
    <original>S</original>
    <variation>F</variation>
    <location>
        <position position="201"/>
    </location>
</feature>
<feature type="sequence conflict" description="In Ref. 6; AAD51780." evidence="11" ref="6">
    <original>V</original>
    <variation>P</variation>
    <location>
        <position position="27"/>
    </location>
</feature>
<feature type="sequence conflict" description="In Ref. 1; AAG23405." evidence="11" ref="1">
    <original>Y</original>
    <variation>I</variation>
    <location>
        <position position="110"/>
    </location>
</feature>
<feature type="sequence conflict" description="In Ref. 1; AAG23405." evidence="11" ref="1">
    <original>E</original>
    <variation>D</variation>
    <location>
        <position position="123"/>
    </location>
</feature>
<feature type="sequence conflict" description="In Ref. 1; AAG23405." evidence="11" ref="1">
    <original>Y</original>
    <variation>V</variation>
    <location>
        <position position="128"/>
    </location>
</feature>
<feature type="sequence conflict" description="In Ref. 1; AAG23405." evidence="11" ref="1">
    <original>F</original>
    <variation>V</variation>
    <location>
        <position position="132"/>
    </location>
</feature>
<feature type="sequence conflict" description="In Ref. 5; AAH40502." evidence="11" ref="5">
    <original>D</original>
    <variation>G</variation>
    <location>
        <position position="342"/>
    </location>
</feature>
<feature type="sequence conflict" description="In Ref. 2; BAF82668." evidence="11" ref="2">
    <original>Q</original>
    <variation>R</variation>
    <location>
        <position position="358"/>
    </location>
</feature>
<evidence type="ECO:0000250" key="1">
    <source>
        <dbReference type="UniProtKB" id="Q3BCU4"/>
    </source>
</evidence>
<evidence type="ECO:0000250" key="2">
    <source>
        <dbReference type="UniProtKB" id="Q5PQZ7"/>
    </source>
</evidence>
<evidence type="ECO:0000250" key="3">
    <source>
        <dbReference type="UniProtKB" id="Q9DG23"/>
    </source>
</evidence>
<evidence type="ECO:0000250" key="4">
    <source>
        <dbReference type="UniProtKB" id="Q9ES83"/>
    </source>
</evidence>
<evidence type="ECO:0000255" key="5"/>
<evidence type="ECO:0000256" key="6">
    <source>
        <dbReference type="SAM" id="MobiDB-lite"/>
    </source>
</evidence>
<evidence type="ECO:0000269" key="7">
    <source>
    </source>
</evidence>
<evidence type="ECO:0000269" key="8">
    <source>
    </source>
</evidence>
<evidence type="ECO:0000269" key="9">
    <source>
    </source>
</evidence>
<evidence type="ECO:0000269" key="10">
    <source>
    </source>
</evidence>
<evidence type="ECO:0000305" key="11"/>
<evidence type="ECO:0000312" key="12">
    <source>
        <dbReference type="HGNC" id="HGNC:1152"/>
    </source>
</evidence>
<reference key="1">
    <citation type="journal article" date="2000" name="Dev. Biol.">
        <title>Isolation and characterization of the novel popeye gene family expressed in skeletal muscle and heart.</title>
        <authorList>
            <person name="Andree B."/>
            <person name="Hillemann T."/>
            <person name="Kessler-Icekson G."/>
            <person name="Schmitt-John T."/>
            <person name="Jockusch H."/>
            <person name="Arnold H.-H."/>
            <person name="Brand T."/>
        </authorList>
    </citation>
    <scope>NUCLEOTIDE SEQUENCE [MRNA]</scope>
    <scope>POSSIBLE FUNCTION</scope>
    <scope>TISSUE SPECIFICITY</scope>
    <source>
        <tissue>Lung</tissue>
    </source>
</reference>
<reference key="2">
    <citation type="journal article" date="2004" name="Nat. Genet.">
        <title>Complete sequencing and characterization of 21,243 full-length human cDNAs.</title>
        <authorList>
            <person name="Ota T."/>
            <person name="Suzuki Y."/>
            <person name="Nishikawa T."/>
            <person name="Otsuki T."/>
            <person name="Sugiyama T."/>
            <person name="Irie R."/>
            <person name="Wakamatsu A."/>
            <person name="Hayashi K."/>
            <person name="Sato H."/>
            <person name="Nagai K."/>
            <person name="Kimura K."/>
            <person name="Makita H."/>
            <person name="Sekine M."/>
            <person name="Obayashi M."/>
            <person name="Nishi T."/>
            <person name="Shibahara T."/>
            <person name="Tanaka T."/>
            <person name="Ishii S."/>
            <person name="Yamamoto J."/>
            <person name="Saito K."/>
            <person name="Kawai Y."/>
            <person name="Isono Y."/>
            <person name="Nakamura Y."/>
            <person name="Nagahari K."/>
            <person name="Murakami K."/>
            <person name="Yasuda T."/>
            <person name="Iwayanagi T."/>
            <person name="Wagatsuma M."/>
            <person name="Shiratori A."/>
            <person name="Sudo H."/>
            <person name="Hosoiri T."/>
            <person name="Kaku Y."/>
            <person name="Kodaira H."/>
            <person name="Kondo H."/>
            <person name="Sugawara M."/>
            <person name="Takahashi M."/>
            <person name="Kanda K."/>
            <person name="Yokoi T."/>
            <person name="Furuya T."/>
            <person name="Kikkawa E."/>
            <person name="Omura Y."/>
            <person name="Abe K."/>
            <person name="Kamihara K."/>
            <person name="Katsuta N."/>
            <person name="Sato K."/>
            <person name="Tanikawa M."/>
            <person name="Yamazaki M."/>
            <person name="Ninomiya K."/>
            <person name="Ishibashi T."/>
            <person name="Yamashita H."/>
            <person name="Murakawa K."/>
            <person name="Fujimori K."/>
            <person name="Tanai H."/>
            <person name="Kimata M."/>
            <person name="Watanabe M."/>
            <person name="Hiraoka S."/>
            <person name="Chiba Y."/>
            <person name="Ishida S."/>
            <person name="Ono Y."/>
            <person name="Takiguchi S."/>
            <person name="Watanabe S."/>
            <person name="Yosida M."/>
            <person name="Hotuta T."/>
            <person name="Kusano J."/>
            <person name="Kanehori K."/>
            <person name="Takahashi-Fujii A."/>
            <person name="Hara H."/>
            <person name="Tanase T.-O."/>
            <person name="Nomura Y."/>
            <person name="Togiya S."/>
            <person name="Komai F."/>
            <person name="Hara R."/>
            <person name="Takeuchi K."/>
            <person name="Arita M."/>
            <person name="Imose N."/>
            <person name="Musashino K."/>
            <person name="Yuuki H."/>
            <person name="Oshima A."/>
            <person name="Sasaki N."/>
            <person name="Aotsuka S."/>
            <person name="Yoshikawa Y."/>
            <person name="Matsunawa H."/>
            <person name="Ichihara T."/>
            <person name="Shiohata N."/>
            <person name="Sano S."/>
            <person name="Moriya S."/>
            <person name="Momiyama H."/>
            <person name="Satoh N."/>
            <person name="Takami S."/>
            <person name="Terashima Y."/>
            <person name="Suzuki O."/>
            <person name="Nakagawa S."/>
            <person name="Senoh A."/>
            <person name="Mizoguchi H."/>
            <person name="Goto Y."/>
            <person name="Shimizu F."/>
            <person name="Wakebe H."/>
            <person name="Hishigaki H."/>
            <person name="Watanabe T."/>
            <person name="Sugiyama A."/>
            <person name="Takemoto M."/>
            <person name="Kawakami B."/>
            <person name="Yamazaki M."/>
            <person name="Watanabe K."/>
            <person name="Kumagai A."/>
            <person name="Itakura S."/>
            <person name="Fukuzumi Y."/>
            <person name="Fujimori Y."/>
            <person name="Komiyama M."/>
            <person name="Tashiro H."/>
            <person name="Tanigami A."/>
            <person name="Fujiwara T."/>
            <person name="Ono T."/>
            <person name="Yamada K."/>
            <person name="Fujii Y."/>
            <person name="Ozaki K."/>
            <person name="Hirao M."/>
            <person name="Ohmori Y."/>
            <person name="Kawabata A."/>
            <person name="Hikiji T."/>
            <person name="Kobatake N."/>
            <person name="Inagaki H."/>
            <person name="Ikema Y."/>
            <person name="Okamoto S."/>
            <person name="Okitani R."/>
            <person name="Kawakami T."/>
            <person name="Noguchi S."/>
            <person name="Itoh T."/>
            <person name="Shigeta K."/>
            <person name="Senba T."/>
            <person name="Matsumura K."/>
            <person name="Nakajima Y."/>
            <person name="Mizuno T."/>
            <person name="Morinaga M."/>
            <person name="Sasaki M."/>
            <person name="Togashi T."/>
            <person name="Oyama M."/>
            <person name="Hata H."/>
            <person name="Watanabe M."/>
            <person name="Komatsu T."/>
            <person name="Mizushima-Sugano J."/>
            <person name="Satoh T."/>
            <person name="Shirai Y."/>
            <person name="Takahashi Y."/>
            <person name="Nakagawa K."/>
            <person name="Okumura K."/>
            <person name="Nagase T."/>
            <person name="Nomura N."/>
            <person name="Kikuchi H."/>
            <person name="Masuho Y."/>
            <person name="Yamashita R."/>
            <person name="Nakai K."/>
            <person name="Yada T."/>
            <person name="Nakamura Y."/>
            <person name="Ohara O."/>
            <person name="Isogai T."/>
            <person name="Sugano S."/>
        </authorList>
    </citation>
    <scope>NUCLEOTIDE SEQUENCE [LARGE SCALE MRNA]</scope>
</reference>
<reference key="3">
    <citation type="journal article" date="2003" name="Nature">
        <title>The DNA sequence and analysis of human chromosome 6.</title>
        <authorList>
            <person name="Mungall A.J."/>
            <person name="Palmer S.A."/>
            <person name="Sims S.K."/>
            <person name="Edwards C.A."/>
            <person name="Ashurst J.L."/>
            <person name="Wilming L."/>
            <person name="Jones M.C."/>
            <person name="Horton R."/>
            <person name="Hunt S.E."/>
            <person name="Scott C.E."/>
            <person name="Gilbert J.G.R."/>
            <person name="Clamp M.E."/>
            <person name="Bethel G."/>
            <person name="Milne S."/>
            <person name="Ainscough R."/>
            <person name="Almeida J.P."/>
            <person name="Ambrose K.D."/>
            <person name="Andrews T.D."/>
            <person name="Ashwell R.I.S."/>
            <person name="Babbage A.K."/>
            <person name="Bagguley C.L."/>
            <person name="Bailey J."/>
            <person name="Banerjee R."/>
            <person name="Barker D.J."/>
            <person name="Barlow K.F."/>
            <person name="Bates K."/>
            <person name="Beare D.M."/>
            <person name="Beasley H."/>
            <person name="Beasley O."/>
            <person name="Bird C.P."/>
            <person name="Blakey S.E."/>
            <person name="Bray-Allen S."/>
            <person name="Brook J."/>
            <person name="Brown A.J."/>
            <person name="Brown J.Y."/>
            <person name="Burford D.C."/>
            <person name="Burrill W."/>
            <person name="Burton J."/>
            <person name="Carder C."/>
            <person name="Carter N.P."/>
            <person name="Chapman J.C."/>
            <person name="Clark S.Y."/>
            <person name="Clark G."/>
            <person name="Clee C.M."/>
            <person name="Clegg S."/>
            <person name="Cobley V."/>
            <person name="Collier R.E."/>
            <person name="Collins J.E."/>
            <person name="Colman L.K."/>
            <person name="Corby N.R."/>
            <person name="Coville G.J."/>
            <person name="Culley K.M."/>
            <person name="Dhami P."/>
            <person name="Davies J."/>
            <person name="Dunn M."/>
            <person name="Earthrowl M.E."/>
            <person name="Ellington A.E."/>
            <person name="Evans K.A."/>
            <person name="Faulkner L."/>
            <person name="Francis M.D."/>
            <person name="Frankish A."/>
            <person name="Frankland J."/>
            <person name="French L."/>
            <person name="Garner P."/>
            <person name="Garnett J."/>
            <person name="Ghori M.J."/>
            <person name="Gilby L.M."/>
            <person name="Gillson C.J."/>
            <person name="Glithero R.J."/>
            <person name="Grafham D.V."/>
            <person name="Grant M."/>
            <person name="Gribble S."/>
            <person name="Griffiths C."/>
            <person name="Griffiths M.N.D."/>
            <person name="Hall R."/>
            <person name="Halls K.S."/>
            <person name="Hammond S."/>
            <person name="Harley J.L."/>
            <person name="Hart E.A."/>
            <person name="Heath P.D."/>
            <person name="Heathcott R."/>
            <person name="Holmes S.J."/>
            <person name="Howden P.J."/>
            <person name="Howe K.L."/>
            <person name="Howell G.R."/>
            <person name="Huckle E."/>
            <person name="Humphray S.J."/>
            <person name="Humphries M.D."/>
            <person name="Hunt A.R."/>
            <person name="Johnson C.M."/>
            <person name="Joy A.A."/>
            <person name="Kay M."/>
            <person name="Keenan S.J."/>
            <person name="Kimberley A.M."/>
            <person name="King A."/>
            <person name="Laird G.K."/>
            <person name="Langford C."/>
            <person name="Lawlor S."/>
            <person name="Leongamornlert D.A."/>
            <person name="Leversha M."/>
            <person name="Lloyd C.R."/>
            <person name="Lloyd D.M."/>
            <person name="Loveland J.E."/>
            <person name="Lovell J."/>
            <person name="Martin S."/>
            <person name="Mashreghi-Mohammadi M."/>
            <person name="Maslen G.L."/>
            <person name="Matthews L."/>
            <person name="McCann O.T."/>
            <person name="McLaren S.J."/>
            <person name="McLay K."/>
            <person name="McMurray A."/>
            <person name="Moore M.J.F."/>
            <person name="Mullikin J.C."/>
            <person name="Niblett D."/>
            <person name="Nickerson T."/>
            <person name="Novik K.L."/>
            <person name="Oliver K."/>
            <person name="Overton-Larty E.K."/>
            <person name="Parker A."/>
            <person name="Patel R."/>
            <person name="Pearce A.V."/>
            <person name="Peck A.I."/>
            <person name="Phillimore B.J.C.T."/>
            <person name="Phillips S."/>
            <person name="Plumb R.W."/>
            <person name="Porter K.M."/>
            <person name="Ramsey Y."/>
            <person name="Ranby S.A."/>
            <person name="Rice C.M."/>
            <person name="Ross M.T."/>
            <person name="Searle S.M."/>
            <person name="Sehra H.K."/>
            <person name="Sheridan E."/>
            <person name="Skuce C.D."/>
            <person name="Smith S."/>
            <person name="Smith M."/>
            <person name="Spraggon L."/>
            <person name="Squares S.L."/>
            <person name="Steward C.A."/>
            <person name="Sycamore N."/>
            <person name="Tamlyn-Hall G."/>
            <person name="Tester J."/>
            <person name="Theaker A.J."/>
            <person name="Thomas D.W."/>
            <person name="Thorpe A."/>
            <person name="Tracey A."/>
            <person name="Tromans A."/>
            <person name="Tubby B."/>
            <person name="Wall M."/>
            <person name="Wallis J.M."/>
            <person name="West A.P."/>
            <person name="White S.S."/>
            <person name="Whitehead S.L."/>
            <person name="Whittaker H."/>
            <person name="Wild A."/>
            <person name="Willey D.J."/>
            <person name="Wilmer T.E."/>
            <person name="Wood J.M."/>
            <person name="Wray P.W."/>
            <person name="Wyatt J.C."/>
            <person name="Young L."/>
            <person name="Younger R.M."/>
            <person name="Bentley D.R."/>
            <person name="Coulson A."/>
            <person name="Durbin R.M."/>
            <person name="Hubbard T."/>
            <person name="Sulston J.E."/>
            <person name="Dunham I."/>
            <person name="Rogers J."/>
            <person name="Beck S."/>
        </authorList>
    </citation>
    <scope>NUCLEOTIDE SEQUENCE [LARGE SCALE GENOMIC DNA]</scope>
</reference>
<reference key="4">
    <citation type="submission" date="2005-09" db="EMBL/GenBank/DDBJ databases">
        <authorList>
            <person name="Mural R.J."/>
            <person name="Istrail S."/>
            <person name="Sutton G.G."/>
            <person name="Florea L."/>
            <person name="Halpern A.L."/>
            <person name="Mobarry C.M."/>
            <person name="Lippert R."/>
            <person name="Walenz B."/>
            <person name="Shatkay H."/>
            <person name="Dew I."/>
            <person name="Miller J.R."/>
            <person name="Flanigan M.J."/>
            <person name="Edwards N.J."/>
            <person name="Bolanos R."/>
            <person name="Fasulo D."/>
            <person name="Halldorsson B.V."/>
            <person name="Hannenhalli S."/>
            <person name="Turner R."/>
            <person name="Yooseph S."/>
            <person name="Lu F."/>
            <person name="Nusskern D.R."/>
            <person name="Shue B.C."/>
            <person name="Zheng X.H."/>
            <person name="Zhong F."/>
            <person name="Delcher A.L."/>
            <person name="Huson D.H."/>
            <person name="Kravitz S.A."/>
            <person name="Mouchard L."/>
            <person name="Reinert K."/>
            <person name="Remington K.A."/>
            <person name="Clark A.G."/>
            <person name="Waterman M.S."/>
            <person name="Eichler E.E."/>
            <person name="Adams M.D."/>
            <person name="Hunkapiller M.W."/>
            <person name="Myers E.W."/>
            <person name="Venter J.C."/>
        </authorList>
    </citation>
    <scope>NUCLEOTIDE SEQUENCE [LARGE SCALE GENOMIC DNA]</scope>
</reference>
<reference key="5">
    <citation type="journal article" date="2004" name="Genome Res.">
        <title>The status, quality, and expansion of the NIH full-length cDNA project: the Mammalian Gene Collection (MGC).</title>
        <authorList>
            <consortium name="The MGC Project Team"/>
        </authorList>
    </citation>
    <scope>NUCLEOTIDE SEQUENCE [LARGE SCALE MRNA]</scope>
    <source>
        <tissue>Testis</tissue>
    </source>
</reference>
<reference key="6">
    <citation type="journal article" date="1999" name="Mamm. Genome">
        <title>Cloning and expression of hbves, a novel and highly conserved mRNA expressed in the developing and adult heart and skeletal muscle in the human.</title>
        <authorList>
            <person name="Reese D.E."/>
            <person name="Bader D.M."/>
        </authorList>
    </citation>
    <scope>NUCLEOTIDE SEQUENCE [MRNA] OF 27-360</scope>
    <scope>TISSUE SPECIFICITY</scope>
</reference>
<reference key="7">
    <citation type="journal article" date="2005" name="J. Cell Sci.">
        <title>Bves modulates epithelial integrity through an interaction at the tight junction.</title>
        <authorList>
            <person name="Osler M.E."/>
            <person name="Chang M.S."/>
            <person name="Bader D.M."/>
        </authorList>
    </citation>
    <scope>FUNCTION</scope>
    <scope>SUBCELLULAR LOCATION</scope>
    <scope>TISSUE SPECIFICITY</scope>
</reference>
<reference key="8">
    <citation type="journal article" date="2016" name="J. Clin. Invest.">
        <title>POPDC1S201F causes muscular dystrophy and arrhythmia by affecting protein trafficking.</title>
        <authorList>
            <person name="Schindler R.F."/>
            <person name="Scotton C."/>
            <person name="Zhang J."/>
            <person name="Passarelli C."/>
            <person name="Ortiz-Bonnin B."/>
            <person name="Simrick S."/>
            <person name="Schwerte T."/>
            <person name="Poon K.L."/>
            <person name="Fang M."/>
            <person name="Rinne S."/>
            <person name="Froese A."/>
            <person name="Nikolaev V.O."/>
            <person name="Grunert C."/>
            <person name="Mueller T."/>
            <person name="Tasca G."/>
            <person name="Sarathchandra P."/>
            <person name="Drago F."/>
            <person name="Dallapiccola B."/>
            <person name="Rapezzi C."/>
            <person name="Arbustini E."/>
            <person name="Di Raimo F.R."/>
            <person name="Neri M."/>
            <person name="Selvatici R."/>
            <person name="Gualandi F."/>
            <person name="Fattori F."/>
            <person name="Pietrangelo A."/>
            <person name="Li W."/>
            <person name="Jiang H."/>
            <person name="Xu X."/>
            <person name="Bertini E."/>
            <person name="Decher N."/>
            <person name="Wang J."/>
            <person name="Brand T."/>
            <person name="Ferlini A."/>
        </authorList>
    </citation>
    <scope>INVOLVEMENT IN LGMDR25</scope>
    <scope>VARIANT LGMDR25 PHE-201</scope>
    <scope>FUNCTION</scope>
    <scope>SUBCELLULAR LOCATION</scope>
    <scope>TISSUE SPECIFICITY</scope>
    <scope>INTERACTION WITH KCNK2</scope>
    <scope>CAMP-BINDING</scope>
</reference>
<dbReference type="EMBL" id="AF204172">
    <property type="protein sequence ID" value="AAG23405.1"/>
    <property type="molecule type" value="mRNA"/>
</dbReference>
<dbReference type="EMBL" id="AK289979">
    <property type="protein sequence ID" value="BAF82668.1"/>
    <property type="molecule type" value="mRNA"/>
</dbReference>
<dbReference type="EMBL" id="AL356775">
    <property type="status" value="NOT_ANNOTATED_CDS"/>
    <property type="molecule type" value="Genomic_DNA"/>
</dbReference>
<dbReference type="EMBL" id="Z95329">
    <property type="status" value="NOT_ANNOTATED_CDS"/>
    <property type="molecule type" value="Genomic_DNA"/>
</dbReference>
<dbReference type="EMBL" id="CH471051">
    <property type="protein sequence ID" value="EAW48430.1"/>
    <property type="molecule type" value="Genomic_DNA"/>
</dbReference>
<dbReference type="EMBL" id="CH471051">
    <property type="protein sequence ID" value="EAW48431.1"/>
    <property type="molecule type" value="Genomic_DNA"/>
</dbReference>
<dbReference type="EMBL" id="CH471051">
    <property type="protein sequence ID" value="EAW48432.1"/>
    <property type="molecule type" value="Genomic_DNA"/>
</dbReference>
<dbReference type="EMBL" id="BC034425">
    <property type="protein sequence ID" value="AAH34425.1"/>
    <property type="molecule type" value="mRNA"/>
</dbReference>
<dbReference type="EMBL" id="BC040502">
    <property type="protein sequence ID" value="AAH40502.2"/>
    <property type="molecule type" value="mRNA"/>
</dbReference>
<dbReference type="EMBL" id="AF124512">
    <property type="protein sequence ID" value="AAD51780.1"/>
    <property type="molecule type" value="mRNA"/>
</dbReference>
<dbReference type="CCDS" id="CCDS5051.1"/>
<dbReference type="RefSeq" id="NP_001186492.1">
    <property type="nucleotide sequence ID" value="NM_001199563.2"/>
</dbReference>
<dbReference type="RefSeq" id="NP_009004.2">
    <property type="nucleotide sequence ID" value="NM_007073.4"/>
</dbReference>
<dbReference type="RefSeq" id="NP_671488.1">
    <property type="nucleotide sequence ID" value="NM_147147.4"/>
</dbReference>
<dbReference type="RefSeq" id="XP_011533700.1">
    <property type="nucleotide sequence ID" value="XM_011535398.2"/>
</dbReference>
<dbReference type="SMR" id="Q8NE79"/>
<dbReference type="BioGRID" id="116321">
    <property type="interactions" value="16"/>
</dbReference>
<dbReference type="FunCoup" id="Q8NE79">
    <property type="interactions" value="841"/>
</dbReference>
<dbReference type="IntAct" id="Q8NE79">
    <property type="interactions" value="12"/>
</dbReference>
<dbReference type="STRING" id="9606.ENSP00000313172"/>
<dbReference type="TCDB" id="8.A.129.1.1">
    <property type="family name" value="the blood vessel epicardial substance (bves) family"/>
</dbReference>
<dbReference type="GlyCosmos" id="Q8NE79">
    <property type="glycosylation" value="2 sites, No reported glycans"/>
</dbReference>
<dbReference type="GlyGen" id="Q8NE79">
    <property type="glycosylation" value="2 sites, 2 N-linked glycans (2 sites)"/>
</dbReference>
<dbReference type="iPTMnet" id="Q8NE79"/>
<dbReference type="PhosphoSitePlus" id="Q8NE79"/>
<dbReference type="SwissPalm" id="Q8NE79"/>
<dbReference type="BioMuta" id="BVES"/>
<dbReference type="DMDM" id="38257661"/>
<dbReference type="MassIVE" id="Q8NE79"/>
<dbReference type="PaxDb" id="9606-ENSP00000313172"/>
<dbReference type="PeptideAtlas" id="Q8NE79"/>
<dbReference type="ProteomicsDB" id="73133"/>
<dbReference type="Antibodypedia" id="3082">
    <property type="antibodies" value="220 antibodies from 31 providers"/>
</dbReference>
<dbReference type="DNASU" id="11149"/>
<dbReference type="Ensembl" id="ENST00000314641.10">
    <property type="protein sequence ID" value="ENSP00000313172.5"/>
    <property type="gene ID" value="ENSG00000112276.14"/>
</dbReference>
<dbReference type="Ensembl" id="ENST00000336775.9">
    <property type="protein sequence ID" value="ENSP00000337259.5"/>
    <property type="gene ID" value="ENSG00000112276.14"/>
</dbReference>
<dbReference type="Ensembl" id="ENST00000446408.2">
    <property type="protein sequence ID" value="ENSP00000397310.2"/>
    <property type="gene ID" value="ENSG00000112276.14"/>
</dbReference>
<dbReference type="GeneID" id="11149"/>
<dbReference type="KEGG" id="hsa:11149"/>
<dbReference type="MANE-Select" id="ENST00000314641.10">
    <property type="protein sequence ID" value="ENSP00000313172.5"/>
    <property type="RefSeq nucleotide sequence ID" value="NM_001199563.2"/>
    <property type="RefSeq protein sequence ID" value="NP_001186492.1"/>
</dbReference>
<dbReference type="UCSC" id="uc003pqw.4">
    <property type="organism name" value="human"/>
</dbReference>
<dbReference type="AGR" id="HGNC:1152"/>
<dbReference type="CTD" id="11149"/>
<dbReference type="DisGeNET" id="11149"/>
<dbReference type="GeneCards" id="POPDC1"/>
<dbReference type="HGNC" id="HGNC:1152">
    <property type="gene designation" value="POPDC1"/>
</dbReference>
<dbReference type="HPA" id="ENSG00000112276">
    <property type="expression patterns" value="Tissue enhanced (heart muscle, skeletal muscle, tongue)"/>
</dbReference>
<dbReference type="MalaCards" id="POPDC1"/>
<dbReference type="MIM" id="604577">
    <property type="type" value="gene"/>
</dbReference>
<dbReference type="MIM" id="616812">
    <property type="type" value="phenotype"/>
</dbReference>
<dbReference type="neXtProt" id="NX_Q8NE79"/>
<dbReference type="OpenTargets" id="ENSG00000112276"/>
<dbReference type="Orphanet" id="476084">
    <property type="disease" value="BVES-related limb-girdle muscular dystrophy"/>
</dbReference>
<dbReference type="PharmGKB" id="PA25469"/>
<dbReference type="VEuPathDB" id="HostDB:ENSG00000112276"/>
<dbReference type="eggNOG" id="ENOG502QRV2">
    <property type="taxonomic scope" value="Eukaryota"/>
</dbReference>
<dbReference type="GeneTree" id="ENSGT00390000002563"/>
<dbReference type="HOGENOM" id="CLU_048494_0_0_1"/>
<dbReference type="InParanoid" id="Q8NE79"/>
<dbReference type="OMA" id="SCQEWEQ"/>
<dbReference type="OrthoDB" id="425611at2759"/>
<dbReference type="PAN-GO" id="Q8NE79">
    <property type="GO annotations" value="6 GO annotations based on evolutionary models"/>
</dbReference>
<dbReference type="PhylomeDB" id="Q8NE79"/>
<dbReference type="TreeFam" id="TF326644"/>
<dbReference type="PathwayCommons" id="Q8NE79"/>
<dbReference type="SignaLink" id="Q8NE79"/>
<dbReference type="SIGNOR" id="Q8NE79"/>
<dbReference type="BioGRID-ORCS" id="11149">
    <property type="hits" value="8 hits in 1147 CRISPR screens"/>
</dbReference>
<dbReference type="ChiTaRS" id="BVES">
    <property type="organism name" value="human"/>
</dbReference>
<dbReference type="GeneWiki" id="Blood_vessel_epicardial_substance"/>
<dbReference type="GenomeRNAi" id="11149"/>
<dbReference type="Pharos" id="Q8NE79">
    <property type="development level" value="Tbio"/>
</dbReference>
<dbReference type="PRO" id="PR:Q8NE79"/>
<dbReference type="Proteomes" id="UP000005640">
    <property type="component" value="Chromosome 6"/>
</dbReference>
<dbReference type="RNAct" id="Q8NE79">
    <property type="molecule type" value="protein"/>
</dbReference>
<dbReference type="Bgee" id="ENSG00000112276">
    <property type="expression patterns" value="Expressed in left ventricle myocardium and 150 other cell types or tissues"/>
</dbReference>
<dbReference type="GO" id="GO:0005923">
    <property type="term" value="C:bicellular tight junction"/>
    <property type="evidence" value="ECO:0000314"/>
    <property type="project" value="UniProtKB"/>
</dbReference>
<dbReference type="GO" id="GO:0005901">
    <property type="term" value="C:caveola"/>
    <property type="evidence" value="ECO:0000250"/>
    <property type="project" value="UniProtKB"/>
</dbReference>
<dbReference type="GO" id="GO:0030054">
    <property type="term" value="C:cell junction"/>
    <property type="evidence" value="ECO:0000314"/>
    <property type="project" value="HPA"/>
</dbReference>
<dbReference type="GO" id="GO:0031253">
    <property type="term" value="C:cell projection membrane"/>
    <property type="evidence" value="ECO:0007669"/>
    <property type="project" value="Ensembl"/>
</dbReference>
<dbReference type="GO" id="GO:0016328">
    <property type="term" value="C:lateral plasma membrane"/>
    <property type="evidence" value="ECO:0000314"/>
    <property type="project" value="UniProtKB"/>
</dbReference>
<dbReference type="GO" id="GO:0016020">
    <property type="term" value="C:membrane"/>
    <property type="evidence" value="ECO:0000314"/>
    <property type="project" value="UniProtKB"/>
</dbReference>
<dbReference type="GO" id="GO:0005886">
    <property type="term" value="C:plasma membrane"/>
    <property type="evidence" value="ECO:0000314"/>
    <property type="project" value="HPA"/>
</dbReference>
<dbReference type="GO" id="GO:0042383">
    <property type="term" value="C:sarcolemma"/>
    <property type="evidence" value="ECO:0000314"/>
    <property type="project" value="UniProtKB"/>
</dbReference>
<dbReference type="GO" id="GO:0030552">
    <property type="term" value="F:cAMP binding"/>
    <property type="evidence" value="ECO:0000318"/>
    <property type="project" value="GO_Central"/>
</dbReference>
<dbReference type="GO" id="GO:0005198">
    <property type="term" value="F:structural molecule activity"/>
    <property type="evidence" value="ECO:0000314"/>
    <property type="project" value="UniProtKB"/>
</dbReference>
<dbReference type="GO" id="GO:0060973">
    <property type="term" value="P:cell migration involved in heart development"/>
    <property type="evidence" value="ECO:0007669"/>
    <property type="project" value="Ensembl"/>
</dbReference>
<dbReference type="GO" id="GO:0090136">
    <property type="term" value="P:epithelial cell-cell adhesion"/>
    <property type="evidence" value="ECO:0000314"/>
    <property type="project" value="UniProtKB"/>
</dbReference>
<dbReference type="GO" id="GO:0007507">
    <property type="term" value="P:heart development"/>
    <property type="evidence" value="ECO:0000315"/>
    <property type="project" value="UniProtKB"/>
</dbReference>
<dbReference type="GO" id="GO:0002244">
    <property type="term" value="P:hematopoietic progenitor cell differentiation"/>
    <property type="evidence" value="ECO:0007669"/>
    <property type="project" value="Ensembl"/>
</dbReference>
<dbReference type="GO" id="GO:0007517">
    <property type="term" value="P:muscle organ development"/>
    <property type="evidence" value="ECO:0000303"/>
    <property type="project" value="UniProtKB"/>
</dbReference>
<dbReference type="GO" id="GO:0040017">
    <property type="term" value="P:positive regulation of locomotion"/>
    <property type="evidence" value="ECO:0000250"/>
    <property type="project" value="UniProtKB"/>
</dbReference>
<dbReference type="GO" id="GO:0001921">
    <property type="term" value="P:positive regulation of receptor recycling"/>
    <property type="evidence" value="ECO:0000250"/>
    <property type="project" value="UniProtKB"/>
</dbReference>
<dbReference type="GO" id="GO:0008360">
    <property type="term" value="P:regulation of cell shape"/>
    <property type="evidence" value="ECO:0000250"/>
    <property type="project" value="UniProtKB"/>
</dbReference>
<dbReference type="GO" id="GO:2001135">
    <property type="term" value="P:regulation of endocytic recycling"/>
    <property type="evidence" value="ECO:0007669"/>
    <property type="project" value="Ensembl"/>
</dbReference>
<dbReference type="GO" id="GO:0043087">
    <property type="term" value="P:regulation of GTPase activity"/>
    <property type="evidence" value="ECO:0000250"/>
    <property type="project" value="UniProtKB"/>
</dbReference>
<dbReference type="GO" id="GO:0002027">
    <property type="term" value="P:regulation of heart rate"/>
    <property type="evidence" value="ECO:0007669"/>
    <property type="project" value="Ensembl"/>
</dbReference>
<dbReference type="GO" id="GO:0042391">
    <property type="term" value="P:regulation of membrane potential"/>
    <property type="evidence" value="ECO:0000318"/>
    <property type="project" value="GO_Central"/>
</dbReference>
<dbReference type="GO" id="GO:0002931">
    <property type="term" value="P:response to ischemia"/>
    <property type="evidence" value="ECO:0000250"/>
    <property type="project" value="UniProtKB"/>
</dbReference>
<dbReference type="GO" id="GO:0060931">
    <property type="term" value="P:sinoatrial node cell development"/>
    <property type="evidence" value="ECO:0007669"/>
    <property type="project" value="Ensembl"/>
</dbReference>
<dbReference type="GO" id="GO:0007519">
    <property type="term" value="P:skeletal muscle tissue development"/>
    <property type="evidence" value="ECO:0000315"/>
    <property type="project" value="UniProtKB"/>
</dbReference>
<dbReference type="GO" id="GO:0051146">
    <property type="term" value="P:striated muscle cell differentiation"/>
    <property type="evidence" value="ECO:0000318"/>
    <property type="project" value="GO_Central"/>
</dbReference>
<dbReference type="GO" id="GO:0034446">
    <property type="term" value="P:substrate adhesion-dependent cell spreading"/>
    <property type="evidence" value="ECO:0000250"/>
    <property type="project" value="UniProtKB"/>
</dbReference>
<dbReference type="GO" id="GO:0048278">
    <property type="term" value="P:vesicle docking"/>
    <property type="evidence" value="ECO:0007669"/>
    <property type="project" value="Ensembl"/>
</dbReference>
<dbReference type="GO" id="GO:0016192">
    <property type="term" value="P:vesicle-mediated transport"/>
    <property type="evidence" value="ECO:0000250"/>
    <property type="project" value="UniProtKB"/>
</dbReference>
<dbReference type="FunFam" id="2.60.120.10:FF:000166">
    <property type="entry name" value="blood vessel epicardial substance isoform X1"/>
    <property type="match status" value="1"/>
</dbReference>
<dbReference type="Gene3D" id="2.60.120.10">
    <property type="entry name" value="Jelly Rolls"/>
    <property type="match status" value="1"/>
</dbReference>
<dbReference type="InterPro" id="IPR018490">
    <property type="entry name" value="cNMP-bd_dom_sf"/>
</dbReference>
<dbReference type="InterPro" id="IPR006916">
    <property type="entry name" value="POPDC1-3"/>
</dbReference>
<dbReference type="InterPro" id="IPR055272">
    <property type="entry name" value="POPDC1-3_dom"/>
</dbReference>
<dbReference type="InterPro" id="IPR014710">
    <property type="entry name" value="RmlC-like_jellyroll"/>
</dbReference>
<dbReference type="PANTHER" id="PTHR12101:SF17">
    <property type="entry name" value="BLOOD VESSEL EPICARDIAL SUBSTANCE"/>
    <property type="match status" value="1"/>
</dbReference>
<dbReference type="PANTHER" id="PTHR12101">
    <property type="entry name" value="POPEYE DOMAIN CONTAINING PROTEIN"/>
    <property type="match status" value="1"/>
</dbReference>
<dbReference type="Pfam" id="PF04831">
    <property type="entry name" value="POPDC1-3"/>
    <property type="match status" value="1"/>
</dbReference>
<dbReference type="SUPFAM" id="SSF51206">
    <property type="entry name" value="cAMP-binding domain-like"/>
    <property type="match status" value="1"/>
</dbReference>